<organism>
    <name type="scientific">Guizotia abyssinica</name>
    <name type="common">Niger</name>
    <name type="synonym">Ramtilla</name>
    <dbReference type="NCBI Taxonomy" id="4230"/>
    <lineage>
        <taxon>Eukaryota</taxon>
        <taxon>Viridiplantae</taxon>
        <taxon>Streptophyta</taxon>
        <taxon>Embryophyta</taxon>
        <taxon>Tracheophyta</taxon>
        <taxon>Spermatophyta</taxon>
        <taxon>Magnoliopsida</taxon>
        <taxon>eudicotyledons</taxon>
        <taxon>Gunneridae</taxon>
        <taxon>Pentapetalae</taxon>
        <taxon>asterids</taxon>
        <taxon>campanulids</taxon>
        <taxon>Asterales</taxon>
        <taxon>Asteraceae</taxon>
        <taxon>Asteroideae</taxon>
        <taxon>Heliantheae alliance</taxon>
        <taxon>Millerieae</taxon>
        <taxon>Guizotia</taxon>
    </lineage>
</organism>
<name>YCF2_GUIAB</name>
<sequence length="2276" mass="267330">MTGHEFKSWILELREILREIKNSHYFLDSWTQFNSVGSFIHIFFHQERFIKLFDSRIWSILLSHNSQGSTSNRYFTIKGVILFGVAVLIYRINNRNMVERKNLYLIGLLPIPMNSIGPRNDTLEESVGSSNINRLIVSLLYLPKGKKIYESSFLNPKESTWVLPITKKCSMPESNWGSRWWRDWIGKKSDSSCKISNETVAGIEILFKEKDLKYLEFVFVYYRDDPIRKDHDWEFFDRLSLRKRQNRINLNSGPLFEILVKHWICYLMSAFREKIPIEVEGFFKQQGAGSTIQSNDIEHVSHLFSRNKWAISLQNCAQFHMWQFRQDLFVSWGKNPPESDFLRNVSRENLIWLDNVWLVNKDRFFRKVRNVSSNIQYDSTRSSFVQVRDSSQLKGSSDQFRDHFDSISNEDSEYHTLLNQREIQQLKERSILWDPSFLQTEGTEIESNRFPKCLSGSSSMSRLFTEREKQMINHMLPEEIEELIGNPTRSVRSFFSDRWSELHLGSNPTERSTRDQKLLKKQQDLSFLRRSENKEMVNLFKIITYLQNTVSIHPISLDSGCDMVPKDEPDMDSSNKISFLNKNPFFDLFHLFHDRNRGGYTLHHDFESEERFQEMADLFTLSITEPDLVYHKRFAFSIDSYGLDPKQFLNGVFNSRYEWKTTSLLVLLVLFPIFYEENESFYRRIRKKRVRISCGNDLEEPKPKIVVFASNNRMEAVNQYRLIRNLIQIQHSTHRYIRNVLNRFFLMNRSDRNFEYGIQRDQIRKDTLNHRTLMKYTINQHLSNLKKSQKRWFDPLIFFSRTERSMNRDPDAYRYKWSTGSNNFQEHLEHFVSEQKSRFQVVFDRLRINPYSIDWSEVIDKKDLSKPLRFFLSKLLLFLSNSLPFLFVSFGNIPIHRSEIYIYELKGPNDPQFLESIGLQIVHLKKLKPFLLDDHETCQKSKFLINGGTISPFLFNKIPKWMIDSFHTRKNRRKSFDNTDSYFSMIFHDQYNWLNPVKSFHRSSLRSSFYKGNQLRFLNNPHHFCFYCNKRFPFYVEKARINNYDFTYGQFLNILFIRNKIFSLCVGKKKHAFWGRDTISAIESQVSNIFIPKAFPQSGDETYNLYKSFHFPSRANPFVRRAIYSIAGISGTPLTEGQIVNFERTYCQPLSDMNLSDSEGKNLYQYLNFNSNMGLIHTPCSEKYLPSEKRKKRSLCLKKCVEKGQMYRTFQRDSAYSTLSKWNLFQTYMPWFLTSTGYRYLKFLFLDTFSDLLPILSSSQKFVSIFHDIMHGSDISWRILQKKFCLPQWNLISEISSKCFHNLLLSEEMIHRNNESPLISTHLTNVREFLYAILFLLLVAAYLVCTHLLFVFGASSELQTEFEKVKSLMIPSSMIELRKILDRYPTSEPNSFWLKNLFLVALKQLGDSLGGNMLLGGGPAYGVKSIRSKKKYLNINLIDIIDLISIIPNPINRITFSRNTRHLSHTSKEIYSLIRKRKNVNGDWIDDKIESWVANSDSIDDEKREFLVQFSTLTTEKRIDQILLSLTHSDHLSKNDSGYQMIEQPGAIYLRDLVDIHKKYLMNYEFNTSSLAERRIFLAHYQTITYSQTSCGANSFHFPSHGKPFSLRLALSLSRGILVIGSIGTGRSYLVKYLAKNSYLPFITVFLNKFLDNKSQGFDDIDIDDIDASDDIDASDDILDMELELLTSMNALTMNMMPEDEDRLYITLQFELAKAMSPCIIWIPNIHDLDVNESNYFSLGLLVNLLSRDYETRNILVIASTHIPQKADPALIAPNKLNTCIKIRRLLIPQQRKHFFTLSYTRGFHLEKKMFHTNGFGSITMGSNARDLVALTNEALSISITQKKSIIDTNTIRSALHRQIWDLRSQVRSVQDHGILFYQIGRAVAQNVLLSNCPIDPISIYMKKKSCNEVDYYLYNWYFELGTSMKKLTILLYLLSCSAGSVTQDLWSLPGPDEKNGITPYGLVENDSGLVRGLLEVEGALVGSSRTCSQFDKDRVTLLLRPEPRNPLDMMQKGSCSILDQRFLYEKDESEFEEGEGEGALDRQQIEEDLFNHIVWAPRIWRPWGFLFDCIERPNELGFPYWSRSFRGKRIIYDEEDELQENDSEFLQSGTVQYQTRDRSSKEQGLFRISQFIWDPADPLFFLFKAQPFVSVFSHRELFADEEMSKGLLTPQTNPPTSLYKRWFIKKTQEKHFELLINRQRWLRTNRSLSNGSFRSNTLSESYQYLSNLFLSNGTLLDQMTKALLRKRWLFPDEMQIGFMEQEKDFPFLSRKDMWP</sequence>
<feature type="chain" id="PRO_0000343771" description="Protein Ycf2">
    <location>
        <begin position="1"/>
        <end position="2276"/>
    </location>
</feature>
<feature type="binding site" evidence="1">
    <location>
        <begin position="1621"/>
        <end position="1628"/>
    </location>
    <ligand>
        <name>ATP</name>
        <dbReference type="ChEBI" id="CHEBI:30616"/>
    </ligand>
</feature>
<dbReference type="EMBL" id="EU549769">
    <property type="protein sequence ID" value="ACB86570.1"/>
    <property type="molecule type" value="Genomic_DNA"/>
</dbReference>
<dbReference type="EMBL" id="EU549769">
    <property type="protein sequence ID" value="ACB86587.1"/>
    <property type="molecule type" value="Genomic_DNA"/>
</dbReference>
<dbReference type="GO" id="GO:0009570">
    <property type="term" value="C:chloroplast stroma"/>
    <property type="evidence" value="ECO:0007669"/>
    <property type="project" value="UniProtKB-SubCell"/>
</dbReference>
<dbReference type="GO" id="GO:0005524">
    <property type="term" value="F:ATP binding"/>
    <property type="evidence" value="ECO:0007669"/>
    <property type="project" value="UniProtKB-KW"/>
</dbReference>
<dbReference type="GO" id="GO:0016887">
    <property type="term" value="F:ATP hydrolysis activity"/>
    <property type="evidence" value="ECO:0007669"/>
    <property type="project" value="InterPro"/>
</dbReference>
<dbReference type="CDD" id="cd19505">
    <property type="entry name" value="RecA-like_Ycf2"/>
    <property type="match status" value="1"/>
</dbReference>
<dbReference type="Gene3D" id="3.40.50.300">
    <property type="entry name" value="P-loop containing nucleotide triphosphate hydrolases"/>
    <property type="match status" value="1"/>
</dbReference>
<dbReference type="HAMAP" id="MF_01330">
    <property type="entry name" value="Ycf2"/>
    <property type="match status" value="1"/>
</dbReference>
<dbReference type="InterPro" id="IPR003593">
    <property type="entry name" value="AAA+_ATPase"/>
</dbReference>
<dbReference type="InterPro" id="IPR003959">
    <property type="entry name" value="ATPase_AAA_core"/>
</dbReference>
<dbReference type="InterPro" id="IPR027417">
    <property type="entry name" value="P-loop_NTPase"/>
</dbReference>
<dbReference type="InterPro" id="IPR008543">
    <property type="entry name" value="Uncharacterised_Ycf2"/>
</dbReference>
<dbReference type="InterPro" id="IPR056777">
    <property type="entry name" value="Ycf2_N"/>
</dbReference>
<dbReference type="PANTHER" id="PTHR33078:SF92">
    <property type="entry name" value="PROTEIN YCF2"/>
    <property type="match status" value="1"/>
</dbReference>
<dbReference type="PANTHER" id="PTHR33078">
    <property type="entry name" value="PROTEIN YCF2-RELATED"/>
    <property type="match status" value="1"/>
</dbReference>
<dbReference type="Pfam" id="PF00004">
    <property type="entry name" value="AAA"/>
    <property type="match status" value="1"/>
</dbReference>
<dbReference type="Pfam" id="PF05695">
    <property type="entry name" value="Ycf2"/>
    <property type="match status" value="1"/>
</dbReference>
<dbReference type="SMART" id="SM00382">
    <property type="entry name" value="AAA"/>
    <property type="match status" value="1"/>
</dbReference>
<dbReference type="SUPFAM" id="SSF52540">
    <property type="entry name" value="P-loop containing nucleoside triphosphate hydrolases"/>
    <property type="match status" value="1"/>
</dbReference>
<proteinExistence type="inferred from homology"/>
<gene>
    <name evidence="1" type="primary">ycf2-A</name>
    <name type="ordered locus">GuabCp066</name>
</gene>
<gene>
    <name evidence="1" type="primary">ycf2-B</name>
    <name type="ordered locus">GuabCp084</name>
</gene>
<protein>
    <recommendedName>
        <fullName evidence="1">Protein Ycf2</fullName>
    </recommendedName>
</protein>
<evidence type="ECO:0000255" key="1">
    <source>
        <dbReference type="HAMAP-Rule" id="MF_01330"/>
    </source>
</evidence>
<keyword id="KW-0067">ATP-binding</keyword>
<keyword id="KW-0150">Chloroplast</keyword>
<keyword id="KW-0547">Nucleotide-binding</keyword>
<keyword id="KW-0934">Plastid</keyword>
<accession>B2LMN7</accession>
<reference key="1">
    <citation type="submission" date="2008-03" db="EMBL/GenBank/DDBJ databases">
        <title>Guizotia abyssinica chloroplast sequenced using Solexa.</title>
        <authorList>
            <person name="Kane N.C."/>
            <person name="Dempewolf H."/>
            <person name="Stewart M.L."/>
            <person name="Cronk Q."/>
            <person name="Rieseberrg L.H."/>
        </authorList>
    </citation>
    <scope>NUCLEOTIDE SEQUENCE [LARGE SCALE GENOMIC DNA]</scope>
    <source>
        <strain>cv. PI 508077</strain>
    </source>
</reference>
<geneLocation type="chloroplast"/>
<comment type="function">
    <text evidence="1">Probable ATPase of unknown function. Its presence in a non-photosynthetic plant (Epifagus virginiana) and experiments in tobacco indicate that it has an essential function which is probably not related to photosynthesis.</text>
</comment>
<comment type="subcellular location">
    <subcellularLocation>
        <location evidence="1">Plastid</location>
        <location evidence="1">Chloroplast stroma</location>
    </subcellularLocation>
</comment>
<comment type="similarity">
    <text evidence="1">Belongs to the Ycf2 family.</text>
</comment>